<organism>
    <name type="scientific">Staphylococcus aureus (strain NCTC 8325 / PS 47)</name>
    <dbReference type="NCBI Taxonomy" id="93061"/>
    <lineage>
        <taxon>Bacteria</taxon>
        <taxon>Bacillati</taxon>
        <taxon>Bacillota</taxon>
        <taxon>Bacilli</taxon>
        <taxon>Bacillales</taxon>
        <taxon>Staphylococcaceae</taxon>
        <taxon>Staphylococcus</taxon>
    </lineage>
</organism>
<evidence type="ECO:0000255" key="1">
    <source>
        <dbReference type="HAMAP-Rule" id="MF_01538"/>
    </source>
</evidence>
<accession>Q2FYL1</accession>
<dbReference type="EMBL" id="CP000253">
    <property type="protein sequence ID" value="ABD30521.1"/>
    <property type="molecule type" value="Genomic_DNA"/>
</dbReference>
<dbReference type="RefSeq" id="WP_000801007.1">
    <property type="nucleotide sequence ID" value="NZ_LS483365.1"/>
</dbReference>
<dbReference type="RefSeq" id="YP_499954.1">
    <property type="nucleotide sequence ID" value="NC_007795.1"/>
</dbReference>
<dbReference type="SMR" id="Q2FYL1"/>
<dbReference type="STRING" id="93061.SAOUHSC_01429"/>
<dbReference type="PaxDb" id="1280-SAXN108_1442"/>
<dbReference type="GeneID" id="3920210"/>
<dbReference type="KEGG" id="sao:SAOUHSC_01429"/>
<dbReference type="PATRIC" id="fig|93061.5.peg.1305"/>
<dbReference type="eggNOG" id="COG4479">
    <property type="taxonomic scope" value="Bacteria"/>
</dbReference>
<dbReference type="HOGENOM" id="CLU_177534_1_0_9"/>
<dbReference type="OrthoDB" id="2242851at2"/>
<dbReference type="PRO" id="PR:Q2FYL1"/>
<dbReference type="Proteomes" id="UP000008816">
    <property type="component" value="Chromosome"/>
</dbReference>
<dbReference type="Gene3D" id="1.10.150.260">
    <property type="entry name" value="YozE SAM-like"/>
    <property type="match status" value="1"/>
</dbReference>
<dbReference type="HAMAP" id="MF_01538">
    <property type="entry name" value="UPF0346"/>
    <property type="match status" value="1"/>
</dbReference>
<dbReference type="InterPro" id="IPR010673">
    <property type="entry name" value="UPF0346"/>
</dbReference>
<dbReference type="InterPro" id="IPR023089">
    <property type="entry name" value="YozE_SAM-like"/>
</dbReference>
<dbReference type="InterPro" id="IPR036806">
    <property type="entry name" value="YozE_SAM-like_sf"/>
</dbReference>
<dbReference type="NCBIfam" id="NF010193">
    <property type="entry name" value="PRK13672.1"/>
    <property type="match status" value="1"/>
</dbReference>
<dbReference type="Pfam" id="PF06855">
    <property type="entry name" value="YozE_SAM_like"/>
    <property type="match status" value="1"/>
</dbReference>
<dbReference type="PIRSF" id="PIRSF037262">
    <property type="entry name" value="UCP037262"/>
    <property type="match status" value="1"/>
</dbReference>
<dbReference type="SUPFAM" id="SSF140652">
    <property type="entry name" value="YozE-like"/>
    <property type="match status" value="1"/>
</dbReference>
<feature type="chain" id="PRO_0000298750" description="UPF0346 protein SAOUHSC_01429">
    <location>
        <begin position="1"/>
        <end position="73"/>
    </location>
</feature>
<sequence length="73" mass="8870">MKNYSFYQFVMTVRGRHDDKGRLAEEIFDDLAFPKHDDDFNILSDYIETHGDFTLPMSVFDDLYEEYTEWLKF</sequence>
<protein>
    <recommendedName>
        <fullName evidence="1">UPF0346 protein SAOUHSC_01429</fullName>
    </recommendedName>
</protein>
<reference key="1">
    <citation type="book" date="2006" name="Gram positive pathogens, 2nd edition">
        <title>The Staphylococcus aureus NCTC 8325 genome.</title>
        <editorList>
            <person name="Fischetti V."/>
            <person name="Novick R."/>
            <person name="Ferretti J."/>
            <person name="Portnoy D."/>
            <person name="Rood J."/>
        </editorList>
        <authorList>
            <person name="Gillaspy A.F."/>
            <person name="Worrell V."/>
            <person name="Orvis J."/>
            <person name="Roe B.A."/>
            <person name="Dyer D.W."/>
            <person name="Iandolo J.J."/>
        </authorList>
    </citation>
    <scope>NUCLEOTIDE SEQUENCE [LARGE SCALE GENOMIC DNA]</scope>
    <source>
        <strain>NCTC 8325 / PS 47</strain>
    </source>
</reference>
<proteinExistence type="inferred from homology"/>
<comment type="similarity">
    <text evidence="1">Belongs to the UPF0346 family.</text>
</comment>
<keyword id="KW-1185">Reference proteome</keyword>
<name>Y1429_STAA8</name>
<gene>
    <name type="ordered locus">SAOUHSC_01429</name>
</gene>